<protein>
    <recommendedName>
        <fullName evidence="1">Aspartate carbamoyltransferase catalytic subunit</fullName>
        <ecNumber evidence="1">2.1.3.2</ecNumber>
    </recommendedName>
    <alternativeName>
        <fullName evidence="1">Aspartate transcarbamylase</fullName>
        <shortName evidence="1">ATCase</shortName>
    </alternativeName>
</protein>
<feature type="chain" id="PRO_0000301626" description="Aspartate carbamoyltransferase catalytic subunit">
    <location>
        <begin position="1"/>
        <end position="300"/>
    </location>
</feature>
<feature type="binding site" evidence="1">
    <location>
        <position position="50"/>
    </location>
    <ligand>
        <name>carbamoyl phosphate</name>
        <dbReference type="ChEBI" id="CHEBI:58228"/>
    </ligand>
</feature>
<feature type="binding site" evidence="1">
    <location>
        <position position="51"/>
    </location>
    <ligand>
        <name>carbamoyl phosphate</name>
        <dbReference type="ChEBI" id="CHEBI:58228"/>
    </ligand>
</feature>
<feature type="binding site" evidence="1">
    <location>
        <position position="78"/>
    </location>
    <ligand>
        <name>L-aspartate</name>
        <dbReference type="ChEBI" id="CHEBI:29991"/>
    </ligand>
</feature>
<feature type="binding site" evidence="1">
    <location>
        <position position="100"/>
    </location>
    <ligand>
        <name>carbamoyl phosphate</name>
        <dbReference type="ChEBI" id="CHEBI:58228"/>
    </ligand>
</feature>
<feature type="binding site" evidence="1">
    <location>
        <position position="127"/>
    </location>
    <ligand>
        <name>carbamoyl phosphate</name>
        <dbReference type="ChEBI" id="CHEBI:58228"/>
    </ligand>
</feature>
<feature type="binding site" evidence="1">
    <location>
        <position position="130"/>
    </location>
    <ligand>
        <name>carbamoyl phosphate</name>
        <dbReference type="ChEBI" id="CHEBI:58228"/>
    </ligand>
</feature>
<feature type="binding site" evidence="1">
    <location>
        <position position="160"/>
    </location>
    <ligand>
        <name>L-aspartate</name>
        <dbReference type="ChEBI" id="CHEBI:29991"/>
    </ligand>
</feature>
<feature type="binding site" evidence="1">
    <location>
        <position position="210"/>
    </location>
    <ligand>
        <name>L-aspartate</name>
        <dbReference type="ChEBI" id="CHEBI:29991"/>
    </ligand>
</feature>
<feature type="binding site" evidence="1">
    <location>
        <position position="253"/>
    </location>
    <ligand>
        <name>carbamoyl phosphate</name>
        <dbReference type="ChEBI" id="CHEBI:58228"/>
    </ligand>
</feature>
<feature type="binding site" evidence="1">
    <location>
        <position position="254"/>
    </location>
    <ligand>
        <name>carbamoyl phosphate</name>
        <dbReference type="ChEBI" id="CHEBI:58228"/>
    </ligand>
</feature>
<gene>
    <name evidence="1" type="primary">pyrB</name>
    <name type="ordered locus">SSP1572</name>
</gene>
<name>PYRB_STAS1</name>
<dbReference type="EC" id="2.1.3.2" evidence="1"/>
<dbReference type="EMBL" id="AP008934">
    <property type="protein sequence ID" value="BAE18717.1"/>
    <property type="molecule type" value="Genomic_DNA"/>
</dbReference>
<dbReference type="RefSeq" id="WP_011303314.1">
    <property type="nucleotide sequence ID" value="NZ_MTGA01000034.1"/>
</dbReference>
<dbReference type="SMR" id="Q49WY1"/>
<dbReference type="GeneID" id="3615316"/>
<dbReference type="KEGG" id="ssp:SSP1572"/>
<dbReference type="PATRIC" id="fig|342451.11.peg.1574"/>
<dbReference type="eggNOG" id="COG0540">
    <property type="taxonomic scope" value="Bacteria"/>
</dbReference>
<dbReference type="HOGENOM" id="CLU_043846_2_1_9"/>
<dbReference type="OrthoDB" id="9774690at2"/>
<dbReference type="UniPathway" id="UPA00070">
    <property type="reaction ID" value="UER00116"/>
</dbReference>
<dbReference type="Proteomes" id="UP000006371">
    <property type="component" value="Chromosome"/>
</dbReference>
<dbReference type="GO" id="GO:0005829">
    <property type="term" value="C:cytosol"/>
    <property type="evidence" value="ECO:0007669"/>
    <property type="project" value="TreeGrafter"/>
</dbReference>
<dbReference type="GO" id="GO:0016597">
    <property type="term" value="F:amino acid binding"/>
    <property type="evidence" value="ECO:0007669"/>
    <property type="project" value="InterPro"/>
</dbReference>
<dbReference type="GO" id="GO:0004070">
    <property type="term" value="F:aspartate carbamoyltransferase activity"/>
    <property type="evidence" value="ECO:0007669"/>
    <property type="project" value="UniProtKB-UniRule"/>
</dbReference>
<dbReference type="GO" id="GO:0006207">
    <property type="term" value="P:'de novo' pyrimidine nucleobase biosynthetic process"/>
    <property type="evidence" value="ECO:0007669"/>
    <property type="project" value="InterPro"/>
</dbReference>
<dbReference type="GO" id="GO:0044205">
    <property type="term" value="P:'de novo' UMP biosynthetic process"/>
    <property type="evidence" value="ECO:0007669"/>
    <property type="project" value="UniProtKB-UniRule"/>
</dbReference>
<dbReference type="GO" id="GO:0006520">
    <property type="term" value="P:amino acid metabolic process"/>
    <property type="evidence" value="ECO:0007669"/>
    <property type="project" value="InterPro"/>
</dbReference>
<dbReference type="FunFam" id="3.40.50.1370:FF:000011">
    <property type="entry name" value="Aspartate carbamoyltransferase"/>
    <property type="match status" value="1"/>
</dbReference>
<dbReference type="Gene3D" id="3.40.50.1370">
    <property type="entry name" value="Aspartate/ornithine carbamoyltransferase"/>
    <property type="match status" value="2"/>
</dbReference>
<dbReference type="HAMAP" id="MF_00001">
    <property type="entry name" value="Asp_carb_tr"/>
    <property type="match status" value="1"/>
</dbReference>
<dbReference type="InterPro" id="IPR006132">
    <property type="entry name" value="Asp/Orn_carbamoyltranf_P-bd"/>
</dbReference>
<dbReference type="InterPro" id="IPR006130">
    <property type="entry name" value="Asp/Orn_carbamoylTrfase"/>
</dbReference>
<dbReference type="InterPro" id="IPR036901">
    <property type="entry name" value="Asp/Orn_carbamoylTrfase_sf"/>
</dbReference>
<dbReference type="InterPro" id="IPR002082">
    <property type="entry name" value="Asp_carbamoyltransf"/>
</dbReference>
<dbReference type="InterPro" id="IPR006131">
    <property type="entry name" value="Asp_carbamoyltransf_Asp/Orn-bd"/>
</dbReference>
<dbReference type="NCBIfam" id="TIGR00670">
    <property type="entry name" value="asp_carb_tr"/>
    <property type="match status" value="1"/>
</dbReference>
<dbReference type="NCBIfam" id="NF002032">
    <property type="entry name" value="PRK00856.1"/>
    <property type="match status" value="1"/>
</dbReference>
<dbReference type="PANTHER" id="PTHR45753:SF6">
    <property type="entry name" value="ASPARTATE CARBAMOYLTRANSFERASE"/>
    <property type="match status" value="1"/>
</dbReference>
<dbReference type="PANTHER" id="PTHR45753">
    <property type="entry name" value="ORNITHINE CARBAMOYLTRANSFERASE, MITOCHONDRIAL"/>
    <property type="match status" value="1"/>
</dbReference>
<dbReference type="Pfam" id="PF00185">
    <property type="entry name" value="OTCace"/>
    <property type="match status" value="1"/>
</dbReference>
<dbReference type="Pfam" id="PF02729">
    <property type="entry name" value="OTCace_N"/>
    <property type="match status" value="1"/>
</dbReference>
<dbReference type="PRINTS" id="PR00100">
    <property type="entry name" value="AOTCASE"/>
</dbReference>
<dbReference type="PRINTS" id="PR00101">
    <property type="entry name" value="ATCASE"/>
</dbReference>
<dbReference type="SUPFAM" id="SSF53671">
    <property type="entry name" value="Aspartate/ornithine carbamoyltransferase"/>
    <property type="match status" value="1"/>
</dbReference>
<dbReference type="PROSITE" id="PS00097">
    <property type="entry name" value="CARBAMOYLTRANSFERASE"/>
    <property type="match status" value="1"/>
</dbReference>
<proteinExistence type="inferred from homology"/>
<evidence type="ECO:0000255" key="1">
    <source>
        <dbReference type="HAMAP-Rule" id="MF_00001"/>
    </source>
</evidence>
<sequence length="300" mass="34032">MDNLLSTEYLNTTEIYDLIQRASAFKNGNAQPGCFEDKFVANLFFENSTRTKSSFLVAEQKLGLKLIDFETSTSSVQKGESLYDTCKTLEQIGANVLVIRHSQTTYYDELKHLNIPIINAGDGSGQHPTQSLLDLMTIYEEYKTFEGLNVLICGDVKNSRVAKSNYQSLTALGAHVMFSSPDEWKDETLEAPYVDIDEVIDRIDIVMLLRVQHERHEDSEVTSFEVSQYHENFGLTQSRYDLLKDRAIIMHPAPVNRGVEIEDTLVEAPKSRIFKQMENGMYIRMAVIDHILQTEGATAK</sequence>
<comment type="function">
    <text evidence="1">Catalyzes the condensation of carbamoyl phosphate and aspartate to form carbamoyl aspartate and inorganic phosphate, the committed step in the de novo pyrimidine nucleotide biosynthesis pathway.</text>
</comment>
<comment type="catalytic activity">
    <reaction evidence="1">
        <text>carbamoyl phosphate + L-aspartate = N-carbamoyl-L-aspartate + phosphate + H(+)</text>
        <dbReference type="Rhea" id="RHEA:20013"/>
        <dbReference type="ChEBI" id="CHEBI:15378"/>
        <dbReference type="ChEBI" id="CHEBI:29991"/>
        <dbReference type="ChEBI" id="CHEBI:32814"/>
        <dbReference type="ChEBI" id="CHEBI:43474"/>
        <dbReference type="ChEBI" id="CHEBI:58228"/>
        <dbReference type="EC" id="2.1.3.2"/>
    </reaction>
</comment>
<comment type="pathway">
    <text evidence="1">Pyrimidine metabolism; UMP biosynthesis via de novo pathway; (S)-dihydroorotate from bicarbonate: step 2/3.</text>
</comment>
<comment type="subunit">
    <text evidence="1">Heterododecamer (2C3:3R2) of six catalytic PyrB chains organized as two trimers (C3), and six regulatory PyrI chains organized as three dimers (R2).</text>
</comment>
<comment type="similarity">
    <text evidence="1">Belongs to the aspartate/ornithine carbamoyltransferase superfamily. ATCase family.</text>
</comment>
<keyword id="KW-0665">Pyrimidine biosynthesis</keyword>
<keyword id="KW-1185">Reference proteome</keyword>
<keyword id="KW-0808">Transferase</keyword>
<accession>Q49WY1</accession>
<reference key="1">
    <citation type="journal article" date="2005" name="Proc. Natl. Acad. Sci. U.S.A.">
        <title>Whole genome sequence of Staphylococcus saprophyticus reveals the pathogenesis of uncomplicated urinary tract infection.</title>
        <authorList>
            <person name="Kuroda M."/>
            <person name="Yamashita A."/>
            <person name="Hirakawa H."/>
            <person name="Kumano M."/>
            <person name="Morikawa K."/>
            <person name="Higashide M."/>
            <person name="Maruyama A."/>
            <person name="Inose Y."/>
            <person name="Matoba K."/>
            <person name="Toh H."/>
            <person name="Kuhara S."/>
            <person name="Hattori M."/>
            <person name="Ohta T."/>
        </authorList>
    </citation>
    <scope>NUCLEOTIDE SEQUENCE [LARGE SCALE GENOMIC DNA]</scope>
    <source>
        <strain>ATCC 15305 / DSM 20229 / NCIMB 8711 / NCTC 7292 / S-41</strain>
    </source>
</reference>
<organism>
    <name type="scientific">Staphylococcus saprophyticus subsp. saprophyticus (strain ATCC 15305 / DSM 20229 / NCIMB 8711 / NCTC 7292 / S-41)</name>
    <dbReference type="NCBI Taxonomy" id="342451"/>
    <lineage>
        <taxon>Bacteria</taxon>
        <taxon>Bacillati</taxon>
        <taxon>Bacillota</taxon>
        <taxon>Bacilli</taxon>
        <taxon>Bacillales</taxon>
        <taxon>Staphylococcaceae</taxon>
        <taxon>Staphylococcus</taxon>
    </lineage>
</organism>